<evidence type="ECO:0000255" key="1">
    <source>
        <dbReference type="HAMAP-Rule" id="MF_00080"/>
    </source>
</evidence>
<accession>B8ZP56</accession>
<sequence>MFFSNKTKEVKTIAKQDLFINDEIRVREVRLIGLEGEQLGIKPLSEAQALADNANVDLVLIQPQAKPPVAKIMDYGKFKFEYQKKQKEQRKKQSVVTVKEVRLSPTIDKGDFDTKLRNARKFLEKGNKVKVSIRFKGRMITHKEIGAKVLAEFAEATQDIAIIEQRAKMDGRQMFMQLAPATDKK</sequence>
<gene>
    <name evidence="1" type="primary">infC</name>
    <name type="ordered locus">SPN23F08840</name>
</gene>
<dbReference type="EMBL" id="FM211187">
    <property type="protein sequence ID" value="CAR68710.1"/>
    <property type="molecule type" value="Genomic_DNA"/>
</dbReference>
<dbReference type="SMR" id="B8ZP56"/>
<dbReference type="KEGG" id="sne:SPN23F08840"/>
<dbReference type="HOGENOM" id="CLU_054919_3_2_9"/>
<dbReference type="GO" id="GO:0005829">
    <property type="term" value="C:cytosol"/>
    <property type="evidence" value="ECO:0007669"/>
    <property type="project" value="TreeGrafter"/>
</dbReference>
<dbReference type="GO" id="GO:0016020">
    <property type="term" value="C:membrane"/>
    <property type="evidence" value="ECO:0007669"/>
    <property type="project" value="TreeGrafter"/>
</dbReference>
<dbReference type="GO" id="GO:0043022">
    <property type="term" value="F:ribosome binding"/>
    <property type="evidence" value="ECO:0007669"/>
    <property type="project" value="TreeGrafter"/>
</dbReference>
<dbReference type="GO" id="GO:0003743">
    <property type="term" value="F:translation initiation factor activity"/>
    <property type="evidence" value="ECO:0007669"/>
    <property type="project" value="UniProtKB-UniRule"/>
</dbReference>
<dbReference type="GO" id="GO:0032790">
    <property type="term" value="P:ribosome disassembly"/>
    <property type="evidence" value="ECO:0007669"/>
    <property type="project" value="TreeGrafter"/>
</dbReference>
<dbReference type="FunFam" id="3.10.20.80:FF:000001">
    <property type="entry name" value="Translation initiation factor IF-3"/>
    <property type="match status" value="1"/>
</dbReference>
<dbReference type="FunFam" id="3.30.110.10:FF:000001">
    <property type="entry name" value="Translation initiation factor IF-3"/>
    <property type="match status" value="1"/>
</dbReference>
<dbReference type="Gene3D" id="3.30.110.10">
    <property type="entry name" value="Translation initiation factor 3 (IF-3), C-terminal domain"/>
    <property type="match status" value="1"/>
</dbReference>
<dbReference type="Gene3D" id="3.10.20.80">
    <property type="entry name" value="Translation initiation factor 3 (IF-3), N-terminal domain"/>
    <property type="match status" value="1"/>
</dbReference>
<dbReference type="HAMAP" id="MF_00080">
    <property type="entry name" value="IF_3"/>
    <property type="match status" value="1"/>
</dbReference>
<dbReference type="InterPro" id="IPR036788">
    <property type="entry name" value="T_IF-3_C_sf"/>
</dbReference>
<dbReference type="InterPro" id="IPR036787">
    <property type="entry name" value="T_IF-3_N_sf"/>
</dbReference>
<dbReference type="InterPro" id="IPR019813">
    <property type="entry name" value="Translation_initiation_fac3_CS"/>
</dbReference>
<dbReference type="InterPro" id="IPR001288">
    <property type="entry name" value="Translation_initiation_fac_3"/>
</dbReference>
<dbReference type="InterPro" id="IPR019815">
    <property type="entry name" value="Translation_initiation_fac_3_C"/>
</dbReference>
<dbReference type="InterPro" id="IPR019814">
    <property type="entry name" value="Translation_initiation_fac_3_N"/>
</dbReference>
<dbReference type="NCBIfam" id="TIGR00168">
    <property type="entry name" value="infC"/>
    <property type="match status" value="1"/>
</dbReference>
<dbReference type="PANTHER" id="PTHR10938">
    <property type="entry name" value="TRANSLATION INITIATION FACTOR IF-3"/>
    <property type="match status" value="1"/>
</dbReference>
<dbReference type="PANTHER" id="PTHR10938:SF0">
    <property type="entry name" value="TRANSLATION INITIATION FACTOR IF-3, MITOCHONDRIAL"/>
    <property type="match status" value="1"/>
</dbReference>
<dbReference type="Pfam" id="PF00707">
    <property type="entry name" value="IF3_C"/>
    <property type="match status" value="1"/>
</dbReference>
<dbReference type="Pfam" id="PF05198">
    <property type="entry name" value="IF3_N"/>
    <property type="match status" value="1"/>
</dbReference>
<dbReference type="SUPFAM" id="SSF55200">
    <property type="entry name" value="Translation initiation factor IF3, C-terminal domain"/>
    <property type="match status" value="1"/>
</dbReference>
<dbReference type="SUPFAM" id="SSF54364">
    <property type="entry name" value="Translation initiation factor IF3, N-terminal domain"/>
    <property type="match status" value="1"/>
</dbReference>
<dbReference type="PROSITE" id="PS00938">
    <property type="entry name" value="IF3"/>
    <property type="match status" value="1"/>
</dbReference>
<comment type="function">
    <text evidence="1">IF-3 binds to the 30S ribosomal subunit and shifts the equilibrium between 70S ribosomes and their 50S and 30S subunits in favor of the free subunits, thus enhancing the availability of 30S subunits on which protein synthesis initiation begins.</text>
</comment>
<comment type="subunit">
    <text evidence="1">Monomer.</text>
</comment>
<comment type="subcellular location">
    <subcellularLocation>
        <location evidence="1">Cytoplasm</location>
    </subcellularLocation>
</comment>
<comment type="similarity">
    <text evidence="1">Belongs to the IF-3 family.</text>
</comment>
<protein>
    <recommendedName>
        <fullName evidence="1">Translation initiation factor IF-3</fullName>
    </recommendedName>
</protein>
<reference key="1">
    <citation type="journal article" date="2009" name="J. Bacteriol.">
        <title>Role of conjugative elements in the evolution of the multidrug-resistant pandemic clone Streptococcus pneumoniae Spain23F ST81.</title>
        <authorList>
            <person name="Croucher N.J."/>
            <person name="Walker D."/>
            <person name="Romero P."/>
            <person name="Lennard N."/>
            <person name="Paterson G.K."/>
            <person name="Bason N.C."/>
            <person name="Mitchell A.M."/>
            <person name="Quail M.A."/>
            <person name="Andrew P.W."/>
            <person name="Parkhill J."/>
            <person name="Bentley S.D."/>
            <person name="Mitchell T.J."/>
        </authorList>
    </citation>
    <scope>NUCLEOTIDE SEQUENCE [LARGE SCALE GENOMIC DNA]</scope>
    <source>
        <strain>ATCC 700669 / Spain 23F-1</strain>
    </source>
</reference>
<keyword id="KW-0963">Cytoplasm</keyword>
<keyword id="KW-0396">Initiation factor</keyword>
<keyword id="KW-0648">Protein biosynthesis</keyword>
<feature type="chain" id="PRO_1000190845" description="Translation initiation factor IF-3">
    <location>
        <begin position="1"/>
        <end position="185"/>
    </location>
</feature>
<organism>
    <name type="scientific">Streptococcus pneumoniae (strain ATCC 700669 / Spain 23F-1)</name>
    <dbReference type="NCBI Taxonomy" id="561276"/>
    <lineage>
        <taxon>Bacteria</taxon>
        <taxon>Bacillati</taxon>
        <taxon>Bacillota</taxon>
        <taxon>Bacilli</taxon>
        <taxon>Lactobacillales</taxon>
        <taxon>Streptococcaceae</taxon>
        <taxon>Streptococcus</taxon>
    </lineage>
</organism>
<proteinExistence type="inferred from homology"/>
<name>IF3_STRPJ</name>